<keyword id="KW-0687">Ribonucleoprotein</keyword>
<keyword id="KW-0689">Ribosomal protein</keyword>
<keyword id="KW-0694">RNA-binding</keyword>
<keyword id="KW-0699">rRNA-binding</keyword>
<accession>Q8YHN1</accession>
<feature type="chain" id="PRO_0000233443" description="Small ribosomal subunit protein uS17">
    <location>
        <begin position="1"/>
        <end position="80"/>
    </location>
</feature>
<dbReference type="EMBL" id="AE008917">
    <property type="protein sequence ID" value="AAL51947.1"/>
    <property type="molecule type" value="Genomic_DNA"/>
</dbReference>
<dbReference type="PIR" id="AH3347">
    <property type="entry name" value="AH3347"/>
</dbReference>
<dbReference type="RefSeq" id="WP_002964353.1">
    <property type="nucleotide sequence ID" value="NZ_GG703780.1"/>
</dbReference>
<dbReference type="SMR" id="Q8YHN1"/>
<dbReference type="GeneID" id="97533533"/>
<dbReference type="KEGG" id="bme:BMEI0766"/>
<dbReference type="KEGG" id="bmel:DK63_656"/>
<dbReference type="PATRIC" id="fig|224914.52.peg.687"/>
<dbReference type="eggNOG" id="COG0186">
    <property type="taxonomic scope" value="Bacteria"/>
</dbReference>
<dbReference type="Proteomes" id="UP000000419">
    <property type="component" value="Chromosome I"/>
</dbReference>
<dbReference type="GO" id="GO:0022627">
    <property type="term" value="C:cytosolic small ribosomal subunit"/>
    <property type="evidence" value="ECO:0007669"/>
    <property type="project" value="TreeGrafter"/>
</dbReference>
<dbReference type="GO" id="GO:0019843">
    <property type="term" value="F:rRNA binding"/>
    <property type="evidence" value="ECO:0007669"/>
    <property type="project" value="UniProtKB-UniRule"/>
</dbReference>
<dbReference type="GO" id="GO:0003735">
    <property type="term" value="F:structural constituent of ribosome"/>
    <property type="evidence" value="ECO:0007669"/>
    <property type="project" value="InterPro"/>
</dbReference>
<dbReference type="GO" id="GO:0006412">
    <property type="term" value="P:translation"/>
    <property type="evidence" value="ECO:0007669"/>
    <property type="project" value="UniProtKB-UniRule"/>
</dbReference>
<dbReference type="CDD" id="cd00364">
    <property type="entry name" value="Ribosomal_uS17"/>
    <property type="match status" value="1"/>
</dbReference>
<dbReference type="Gene3D" id="2.40.50.140">
    <property type="entry name" value="Nucleic acid-binding proteins"/>
    <property type="match status" value="1"/>
</dbReference>
<dbReference type="HAMAP" id="MF_01345_B">
    <property type="entry name" value="Ribosomal_uS17_B"/>
    <property type="match status" value="1"/>
</dbReference>
<dbReference type="InterPro" id="IPR012340">
    <property type="entry name" value="NA-bd_OB-fold"/>
</dbReference>
<dbReference type="InterPro" id="IPR000266">
    <property type="entry name" value="Ribosomal_uS17"/>
</dbReference>
<dbReference type="InterPro" id="IPR019984">
    <property type="entry name" value="Ribosomal_uS17_bact/chlr"/>
</dbReference>
<dbReference type="NCBIfam" id="NF004123">
    <property type="entry name" value="PRK05610.1"/>
    <property type="match status" value="1"/>
</dbReference>
<dbReference type="NCBIfam" id="TIGR03635">
    <property type="entry name" value="uS17_bact"/>
    <property type="match status" value="1"/>
</dbReference>
<dbReference type="PANTHER" id="PTHR10744">
    <property type="entry name" value="40S RIBOSOMAL PROTEIN S11 FAMILY MEMBER"/>
    <property type="match status" value="1"/>
</dbReference>
<dbReference type="PANTHER" id="PTHR10744:SF1">
    <property type="entry name" value="SMALL RIBOSOMAL SUBUNIT PROTEIN US17M"/>
    <property type="match status" value="1"/>
</dbReference>
<dbReference type="Pfam" id="PF00366">
    <property type="entry name" value="Ribosomal_S17"/>
    <property type="match status" value="1"/>
</dbReference>
<dbReference type="PRINTS" id="PR00973">
    <property type="entry name" value="RIBOSOMALS17"/>
</dbReference>
<dbReference type="SUPFAM" id="SSF50249">
    <property type="entry name" value="Nucleic acid-binding proteins"/>
    <property type="match status" value="1"/>
</dbReference>
<comment type="function">
    <text evidence="1">One of the primary rRNA binding proteins, it binds specifically to the 5'-end of 16S ribosomal RNA.</text>
</comment>
<comment type="subunit">
    <text evidence="1">Part of the 30S ribosomal subunit.</text>
</comment>
<comment type="similarity">
    <text evidence="1">Belongs to the universal ribosomal protein uS17 family.</text>
</comment>
<reference key="1">
    <citation type="journal article" date="2002" name="Proc. Natl. Acad. Sci. U.S.A.">
        <title>The genome sequence of the facultative intracellular pathogen Brucella melitensis.</title>
        <authorList>
            <person name="DelVecchio V.G."/>
            <person name="Kapatral V."/>
            <person name="Redkar R.J."/>
            <person name="Patra G."/>
            <person name="Mujer C."/>
            <person name="Los T."/>
            <person name="Ivanova N."/>
            <person name="Anderson I."/>
            <person name="Bhattacharyya A."/>
            <person name="Lykidis A."/>
            <person name="Reznik G."/>
            <person name="Jablonski L."/>
            <person name="Larsen N."/>
            <person name="D'Souza M."/>
            <person name="Bernal A."/>
            <person name="Mazur M."/>
            <person name="Goltsman E."/>
            <person name="Selkov E."/>
            <person name="Elzer P.H."/>
            <person name="Hagius S."/>
            <person name="O'Callaghan D."/>
            <person name="Letesson J.-J."/>
            <person name="Haselkorn R."/>
            <person name="Kyrpides N.C."/>
            <person name="Overbeek R."/>
        </authorList>
    </citation>
    <scope>NUCLEOTIDE SEQUENCE [LARGE SCALE GENOMIC DNA]</scope>
    <source>
        <strain>ATCC 23456 / CCUG 17765 / NCTC 10094 / 16M</strain>
    </source>
</reference>
<organism>
    <name type="scientific">Brucella melitensis biotype 1 (strain ATCC 23456 / CCUG 17765 / NCTC 10094 / 16M)</name>
    <dbReference type="NCBI Taxonomy" id="224914"/>
    <lineage>
        <taxon>Bacteria</taxon>
        <taxon>Pseudomonadati</taxon>
        <taxon>Pseudomonadota</taxon>
        <taxon>Alphaproteobacteria</taxon>
        <taxon>Hyphomicrobiales</taxon>
        <taxon>Brucellaceae</taxon>
        <taxon>Brucella/Ochrobactrum group</taxon>
        <taxon>Brucella</taxon>
    </lineage>
</organism>
<name>RS17_BRUME</name>
<evidence type="ECO:0000255" key="1">
    <source>
        <dbReference type="HAMAP-Rule" id="MF_01345"/>
    </source>
</evidence>
<evidence type="ECO:0000305" key="2"/>
<sequence>MPKRVLQGVVVSDKNDKTVVVKVERRYSHPLLQKTVRQSKKYKAHDENNQFKVGDFVSIQESAPISKDKRWVVLTSEAAG</sequence>
<proteinExistence type="inferred from homology"/>
<protein>
    <recommendedName>
        <fullName evidence="1">Small ribosomal subunit protein uS17</fullName>
    </recommendedName>
    <alternativeName>
        <fullName evidence="2">30S ribosomal protein S17</fullName>
    </alternativeName>
</protein>
<gene>
    <name evidence="1" type="primary">rpsQ</name>
    <name type="ordered locus">BMEI0766</name>
</gene>